<gene>
    <name evidence="1" type="primary">cmoB</name>
    <name type="ordered locus">EcE24377A_2102</name>
</gene>
<keyword id="KW-1185">Reference proteome</keyword>
<keyword id="KW-0808">Transferase</keyword>
<keyword id="KW-0819">tRNA processing</keyword>
<accession>A7ZMZ6</accession>
<proteinExistence type="inferred from homology"/>
<comment type="function">
    <text evidence="1">Catalyzes carboxymethyl transfer from carboxy-S-adenosyl-L-methionine (Cx-SAM) to 5-hydroxyuridine (ho5U) to form 5-carboxymethoxyuridine (cmo5U) at position 34 in tRNAs.</text>
</comment>
<comment type="catalytic activity">
    <reaction evidence="1">
        <text>carboxy-S-adenosyl-L-methionine + 5-hydroxyuridine(34) in tRNA = 5-carboxymethoxyuridine(34) in tRNA + S-adenosyl-L-homocysteine + H(+)</text>
        <dbReference type="Rhea" id="RHEA:52848"/>
        <dbReference type="Rhea" id="RHEA-COMP:13381"/>
        <dbReference type="Rhea" id="RHEA-COMP:13383"/>
        <dbReference type="ChEBI" id="CHEBI:15378"/>
        <dbReference type="ChEBI" id="CHEBI:57856"/>
        <dbReference type="ChEBI" id="CHEBI:134278"/>
        <dbReference type="ChEBI" id="CHEBI:136877"/>
        <dbReference type="ChEBI" id="CHEBI:136879"/>
    </reaction>
</comment>
<comment type="subunit">
    <text evidence="1">Homotetramer.</text>
</comment>
<comment type="similarity">
    <text evidence="1">Belongs to the class I-like SAM-binding methyltransferase superfamily. CmoB family.</text>
</comment>
<reference key="1">
    <citation type="journal article" date="2008" name="J. Bacteriol.">
        <title>The pangenome structure of Escherichia coli: comparative genomic analysis of E. coli commensal and pathogenic isolates.</title>
        <authorList>
            <person name="Rasko D.A."/>
            <person name="Rosovitz M.J."/>
            <person name="Myers G.S.A."/>
            <person name="Mongodin E.F."/>
            <person name="Fricke W.F."/>
            <person name="Gajer P."/>
            <person name="Crabtree J."/>
            <person name="Sebaihia M."/>
            <person name="Thomson N.R."/>
            <person name="Chaudhuri R."/>
            <person name="Henderson I.R."/>
            <person name="Sperandio V."/>
            <person name="Ravel J."/>
        </authorList>
    </citation>
    <scope>NUCLEOTIDE SEQUENCE [LARGE SCALE GENOMIC DNA]</scope>
    <source>
        <strain>E24377A / ETEC</strain>
    </source>
</reference>
<feature type="chain" id="PRO_1000069327" description="tRNA U34 carboxymethyltransferase">
    <location>
        <begin position="1"/>
        <end position="323"/>
    </location>
</feature>
<feature type="binding site" evidence="1">
    <location>
        <position position="91"/>
    </location>
    <ligand>
        <name>carboxy-S-adenosyl-L-methionine</name>
        <dbReference type="ChEBI" id="CHEBI:134278"/>
    </ligand>
</feature>
<feature type="binding site" evidence="1">
    <location>
        <position position="105"/>
    </location>
    <ligand>
        <name>carboxy-S-adenosyl-L-methionine</name>
        <dbReference type="ChEBI" id="CHEBI:134278"/>
    </ligand>
</feature>
<feature type="binding site" evidence="1">
    <location>
        <position position="110"/>
    </location>
    <ligand>
        <name>carboxy-S-adenosyl-L-methionine</name>
        <dbReference type="ChEBI" id="CHEBI:134278"/>
    </ligand>
</feature>
<feature type="binding site" evidence="1">
    <location>
        <position position="130"/>
    </location>
    <ligand>
        <name>carboxy-S-adenosyl-L-methionine</name>
        <dbReference type="ChEBI" id="CHEBI:134278"/>
    </ligand>
</feature>
<feature type="binding site" evidence="1">
    <location>
        <begin position="152"/>
        <end position="154"/>
    </location>
    <ligand>
        <name>carboxy-S-adenosyl-L-methionine</name>
        <dbReference type="ChEBI" id="CHEBI:134278"/>
    </ligand>
</feature>
<feature type="binding site" evidence="1">
    <location>
        <begin position="181"/>
        <end position="182"/>
    </location>
    <ligand>
        <name>carboxy-S-adenosyl-L-methionine</name>
        <dbReference type="ChEBI" id="CHEBI:134278"/>
    </ligand>
</feature>
<feature type="binding site" evidence="1">
    <location>
        <position position="196"/>
    </location>
    <ligand>
        <name>carboxy-S-adenosyl-L-methionine</name>
        <dbReference type="ChEBI" id="CHEBI:134278"/>
    </ligand>
</feature>
<feature type="binding site" evidence="1">
    <location>
        <position position="200"/>
    </location>
    <ligand>
        <name>carboxy-S-adenosyl-L-methionine</name>
        <dbReference type="ChEBI" id="CHEBI:134278"/>
    </ligand>
</feature>
<feature type="binding site" evidence="1">
    <location>
        <position position="315"/>
    </location>
    <ligand>
        <name>carboxy-S-adenosyl-L-methionine</name>
        <dbReference type="ChEBI" id="CHEBI:134278"/>
    </ligand>
</feature>
<dbReference type="EC" id="2.5.1.-" evidence="1"/>
<dbReference type="EMBL" id="CP000800">
    <property type="protein sequence ID" value="ABV16892.1"/>
    <property type="molecule type" value="Genomic_DNA"/>
</dbReference>
<dbReference type="RefSeq" id="WP_000564732.1">
    <property type="nucleotide sequence ID" value="NC_009801.1"/>
</dbReference>
<dbReference type="SMR" id="A7ZMZ6"/>
<dbReference type="KEGG" id="ecw:EcE24377A_2102"/>
<dbReference type="HOGENOM" id="CLU_052665_0_0_6"/>
<dbReference type="Proteomes" id="UP000001122">
    <property type="component" value="Chromosome"/>
</dbReference>
<dbReference type="GO" id="GO:0016765">
    <property type="term" value="F:transferase activity, transferring alkyl or aryl (other than methyl) groups"/>
    <property type="evidence" value="ECO:0007669"/>
    <property type="project" value="UniProtKB-UniRule"/>
</dbReference>
<dbReference type="GO" id="GO:0002098">
    <property type="term" value="P:tRNA wobble uridine modification"/>
    <property type="evidence" value="ECO:0007669"/>
    <property type="project" value="InterPro"/>
</dbReference>
<dbReference type="CDD" id="cd02440">
    <property type="entry name" value="AdoMet_MTases"/>
    <property type="match status" value="1"/>
</dbReference>
<dbReference type="FunFam" id="3.40.50.150:FF:000080">
    <property type="entry name" value="tRNA U34 carboxymethyltransferase"/>
    <property type="match status" value="1"/>
</dbReference>
<dbReference type="Gene3D" id="3.40.50.150">
    <property type="entry name" value="Vaccinia Virus protein VP39"/>
    <property type="match status" value="1"/>
</dbReference>
<dbReference type="HAMAP" id="MF_01590">
    <property type="entry name" value="tRNA_carboxymethyltr_CmoB"/>
    <property type="match status" value="1"/>
</dbReference>
<dbReference type="InterPro" id="IPR010017">
    <property type="entry name" value="CmoB"/>
</dbReference>
<dbReference type="InterPro" id="IPR027555">
    <property type="entry name" value="Mo5U34_MeTrfas-like"/>
</dbReference>
<dbReference type="InterPro" id="IPR029063">
    <property type="entry name" value="SAM-dependent_MTases_sf"/>
</dbReference>
<dbReference type="NCBIfam" id="NF011650">
    <property type="entry name" value="PRK15068.1"/>
    <property type="match status" value="1"/>
</dbReference>
<dbReference type="NCBIfam" id="TIGR00452">
    <property type="entry name" value="tRNA 5-methoxyuridine(34)/uridine 5-oxyacetic acid(34) synthase CmoB"/>
    <property type="match status" value="1"/>
</dbReference>
<dbReference type="PANTHER" id="PTHR43861:SF3">
    <property type="entry name" value="PUTATIVE (AFU_ORTHOLOGUE AFUA_2G14390)-RELATED"/>
    <property type="match status" value="1"/>
</dbReference>
<dbReference type="PANTHER" id="PTHR43861">
    <property type="entry name" value="TRANS-ACONITATE 2-METHYLTRANSFERASE-RELATED"/>
    <property type="match status" value="1"/>
</dbReference>
<dbReference type="Pfam" id="PF08003">
    <property type="entry name" value="Methyltransf_9"/>
    <property type="match status" value="1"/>
</dbReference>
<dbReference type="SUPFAM" id="SSF53335">
    <property type="entry name" value="S-adenosyl-L-methionine-dependent methyltransferases"/>
    <property type="match status" value="1"/>
</dbReference>
<sequence>MIDFGNFYSLIAKNHLSHWLETLPAQIANWQREQQHGLFKQWSNAVEFLPEIKPYRLDLLHSVTAESEEPLSAGQIKRIETLMRNLMPWRKGPFSLYGVNIDTEWRSDWKWDRVLPHLSDLTGRTILDVGCGSGYHMWRMIGAGAHLAVGIDPTQLFLCQFEAVRKLLGNDQRAHLLPLGIEQLPALKAFDTVFSMGVLYHRRSPLEHLWQLKDQLVNEGELVLETLVIDGDENTVLVPGDRYAQMRNVYFIPSALALKNWLKKCGFVDIRIVDVCVTTTEEQRRTEWMVTESLSDFLDPHDPSKTVEGYPAPKRAVLIARKP</sequence>
<evidence type="ECO:0000255" key="1">
    <source>
        <dbReference type="HAMAP-Rule" id="MF_01590"/>
    </source>
</evidence>
<protein>
    <recommendedName>
        <fullName evidence="1">tRNA U34 carboxymethyltransferase</fullName>
        <ecNumber evidence="1">2.5.1.-</ecNumber>
    </recommendedName>
</protein>
<name>CMOB_ECO24</name>
<organism>
    <name type="scientific">Escherichia coli O139:H28 (strain E24377A / ETEC)</name>
    <dbReference type="NCBI Taxonomy" id="331111"/>
    <lineage>
        <taxon>Bacteria</taxon>
        <taxon>Pseudomonadati</taxon>
        <taxon>Pseudomonadota</taxon>
        <taxon>Gammaproteobacteria</taxon>
        <taxon>Enterobacterales</taxon>
        <taxon>Enterobacteriaceae</taxon>
        <taxon>Escherichia</taxon>
    </lineage>
</organism>